<comment type="function">
    <text evidence="1">Catalyzes the isomerization between 2-isopropylmalate and 3-isopropylmalate, via the formation of 2-isopropylmaleate.</text>
</comment>
<comment type="catalytic activity">
    <reaction evidence="1">
        <text>(2R,3S)-3-isopropylmalate = (2S)-2-isopropylmalate</text>
        <dbReference type="Rhea" id="RHEA:32287"/>
        <dbReference type="ChEBI" id="CHEBI:1178"/>
        <dbReference type="ChEBI" id="CHEBI:35121"/>
        <dbReference type="EC" id="4.2.1.33"/>
    </reaction>
</comment>
<comment type="cofactor">
    <cofactor evidence="1">
        <name>[4Fe-4S] cluster</name>
        <dbReference type="ChEBI" id="CHEBI:49883"/>
    </cofactor>
    <text evidence="1">Binds 1 [4Fe-4S] cluster per subunit.</text>
</comment>
<comment type="pathway">
    <text evidence="1">Amino-acid biosynthesis; L-leucine biosynthesis; L-leucine from 3-methyl-2-oxobutanoate: step 2/4.</text>
</comment>
<comment type="subunit">
    <text evidence="1">Heterodimer of LeuC and LeuD.</text>
</comment>
<comment type="similarity">
    <text evidence="1">Belongs to the aconitase/IPM isomerase family. LeuC type 1 subfamily.</text>
</comment>
<gene>
    <name evidence="1" type="primary">leuC</name>
    <name type="ordered locus">BC_1402</name>
</gene>
<reference key="1">
    <citation type="journal article" date="2003" name="Nature">
        <title>Genome sequence of Bacillus cereus and comparative analysis with Bacillus anthracis.</title>
        <authorList>
            <person name="Ivanova N."/>
            <person name="Sorokin A."/>
            <person name="Anderson I."/>
            <person name="Galleron N."/>
            <person name="Candelon B."/>
            <person name="Kapatral V."/>
            <person name="Bhattacharyya A."/>
            <person name="Reznik G."/>
            <person name="Mikhailova N."/>
            <person name="Lapidus A."/>
            <person name="Chu L."/>
            <person name="Mazur M."/>
            <person name="Goltsman E."/>
            <person name="Larsen N."/>
            <person name="D'Souza M."/>
            <person name="Walunas T."/>
            <person name="Grechkin Y."/>
            <person name="Pusch G."/>
            <person name="Haselkorn R."/>
            <person name="Fonstein M."/>
            <person name="Ehrlich S.D."/>
            <person name="Overbeek R."/>
            <person name="Kyrpides N.C."/>
        </authorList>
    </citation>
    <scope>NUCLEOTIDE SEQUENCE [LARGE SCALE GENOMIC DNA]</scope>
    <source>
        <strain>ATCC 14579 / DSM 31 / CCUG 7414 / JCM 2152 / NBRC 15305 / NCIMB 9373 / NCTC 2599 / NRRL B-3711</strain>
    </source>
</reference>
<sequence length="464" mass="51324">MGKRLLDKLWERHVVATNENGLDLLYIDLHLVHEVTSPQAFEGLRLTNRTVRRPDLTFATMDHNIPTKDVWNITDRIAKQQLDTLRQNCKQFQVPLADIGDEEQGIVHVIGPELGLTQPGKTIVCGDSHTATHGAFGALAFGIGTSEVEHVLATQTLWQRKPKAMGIELKGKLPQGVYAKDIILHLLSKYGVAVGTGYVMEFYGEAIHAMDMEERMTLCNMAIEGGAKAGIIAPDEKTFAYVKGRKYAPKDYESIKKKWSELYTDLDAVYDLHILVDVTDLAPYVTWGTNPSMGVRIDEKLPEKHDANDERAFSYMGLSPGQSTYDIPVQHVFIGSCTNSRLSDLEIAASVVKGKKVKEGVRALVVPGSQRVREAAMHKGLHRIFEEAGFEWREPGCSMCLGMNPDQVPEGEHCASTSNRNFEGRQGKGARTHLVSPAMAAAAALYGHFVDIRKESYDGAISYS</sequence>
<keyword id="KW-0004">4Fe-4S</keyword>
<keyword id="KW-0028">Amino-acid biosynthesis</keyword>
<keyword id="KW-0100">Branched-chain amino acid biosynthesis</keyword>
<keyword id="KW-0408">Iron</keyword>
<keyword id="KW-0411">Iron-sulfur</keyword>
<keyword id="KW-0432">Leucine biosynthesis</keyword>
<keyword id="KW-0456">Lyase</keyword>
<keyword id="KW-0479">Metal-binding</keyword>
<keyword id="KW-1185">Reference proteome</keyword>
<name>LEUC_BACCR</name>
<protein>
    <recommendedName>
        <fullName evidence="1">3-isopropylmalate dehydratase large subunit</fullName>
        <ecNumber evidence="1">4.2.1.33</ecNumber>
    </recommendedName>
    <alternativeName>
        <fullName evidence="1">Alpha-IPM isomerase</fullName>
        <shortName evidence="1">IPMI</shortName>
    </alternativeName>
    <alternativeName>
        <fullName evidence="1">Isopropylmalate isomerase</fullName>
    </alternativeName>
</protein>
<accession>Q81G10</accession>
<evidence type="ECO:0000255" key="1">
    <source>
        <dbReference type="HAMAP-Rule" id="MF_01026"/>
    </source>
</evidence>
<dbReference type="EC" id="4.2.1.33" evidence="1"/>
<dbReference type="EMBL" id="AE016877">
    <property type="protein sequence ID" value="AAP08383.1"/>
    <property type="molecule type" value="Genomic_DNA"/>
</dbReference>
<dbReference type="RefSeq" id="NP_831182.1">
    <property type="nucleotide sequence ID" value="NC_004722.1"/>
</dbReference>
<dbReference type="RefSeq" id="WP_000518111.1">
    <property type="nucleotide sequence ID" value="NZ_CP138336.1"/>
</dbReference>
<dbReference type="SMR" id="Q81G10"/>
<dbReference type="STRING" id="226900.BC_1402"/>
<dbReference type="KEGG" id="bce:BC1402"/>
<dbReference type="PATRIC" id="fig|226900.8.peg.1379"/>
<dbReference type="HOGENOM" id="CLU_006714_3_4_9"/>
<dbReference type="OrthoDB" id="9802769at2"/>
<dbReference type="UniPathway" id="UPA00048">
    <property type="reaction ID" value="UER00071"/>
</dbReference>
<dbReference type="Proteomes" id="UP000001417">
    <property type="component" value="Chromosome"/>
</dbReference>
<dbReference type="GO" id="GO:0003861">
    <property type="term" value="F:3-isopropylmalate dehydratase activity"/>
    <property type="evidence" value="ECO:0007669"/>
    <property type="project" value="UniProtKB-UniRule"/>
</dbReference>
<dbReference type="GO" id="GO:0051539">
    <property type="term" value="F:4 iron, 4 sulfur cluster binding"/>
    <property type="evidence" value="ECO:0007669"/>
    <property type="project" value="UniProtKB-KW"/>
</dbReference>
<dbReference type="GO" id="GO:0046872">
    <property type="term" value="F:metal ion binding"/>
    <property type="evidence" value="ECO:0007669"/>
    <property type="project" value="UniProtKB-KW"/>
</dbReference>
<dbReference type="GO" id="GO:0009098">
    <property type="term" value="P:L-leucine biosynthetic process"/>
    <property type="evidence" value="ECO:0007669"/>
    <property type="project" value="UniProtKB-UniRule"/>
</dbReference>
<dbReference type="CDD" id="cd01583">
    <property type="entry name" value="IPMI"/>
    <property type="match status" value="1"/>
</dbReference>
<dbReference type="FunFam" id="3.30.499.10:FF:000007">
    <property type="entry name" value="3-isopropylmalate dehydratase large subunit"/>
    <property type="match status" value="1"/>
</dbReference>
<dbReference type="Gene3D" id="3.30.499.10">
    <property type="entry name" value="Aconitase, domain 3"/>
    <property type="match status" value="2"/>
</dbReference>
<dbReference type="HAMAP" id="MF_01026">
    <property type="entry name" value="LeuC_type1"/>
    <property type="match status" value="1"/>
</dbReference>
<dbReference type="InterPro" id="IPR004430">
    <property type="entry name" value="3-IsopropMal_deHydase_lsu"/>
</dbReference>
<dbReference type="InterPro" id="IPR015931">
    <property type="entry name" value="Acnase/IPM_dHydase_lsu_aba_1/3"/>
</dbReference>
<dbReference type="InterPro" id="IPR001030">
    <property type="entry name" value="Acoase/IPM_deHydtase_lsu_aba"/>
</dbReference>
<dbReference type="InterPro" id="IPR018136">
    <property type="entry name" value="Aconitase_4Fe-4S_BS"/>
</dbReference>
<dbReference type="InterPro" id="IPR036008">
    <property type="entry name" value="Aconitase_4Fe-4S_dom"/>
</dbReference>
<dbReference type="InterPro" id="IPR050067">
    <property type="entry name" value="IPM_dehydratase_rel_enz"/>
</dbReference>
<dbReference type="InterPro" id="IPR033941">
    <property type="entry name" value="IPMI_cat"/>
</dbReference>
<dbReference type="NCBIfam" id="TIGR00170">
    <property type="entry name" value="leuC"/>
    <property type="match status" value="1"/>
</dbReference>
<dbReference type="NCBIfam" id="NF004016">
    <property type="entry name" value="PRK05478.1"/>
    <property type="match status" value="1"/>
</dbReference>
<dbReference type="NCBIfam" id="NF009116">
    <property type="entry name" value="PRK12466.1"/>
    <property type="match status" value="1"/>
</dbReference>
<dbReference type="PANTHER" id="PTHR43822:SF9">
    <property type="entry name" value="3-ISOPROPYLMALATE DEHYDRATASE"/>
    <property type="match status" value="1"/>
</dbReference>
<dbReference type="PANTHER" id="PTHR43822">
    <property type="entry name" value="HOMOACONITASE, MITOCHONDRIAL-RELATED"/>
    <property type="match status" value="1"/>
</dbReference>
<dbReference type="Pfam" id="PF00330">
    <property type="entry name" value="Aconitase"/>
    <property type="match status" value="1"/>
</dbReference>
<dbReference type="PRINTS" id="PR00415">
    <property type="entry name" value="ACONITASE"/>
</dbReference>
<dbReference type="SUPFAM" id="SSF53732">
    <property type="entry name" value="Aconitase iron-sulfur domain"/>
    <property type="match status" value="1"/>
</dbReference>
<dbReference type="PROSITE" id="PS00450">
    <property type="entry name" value="ACONITASE_1"/>
    <property type="match status" value="1"/>
</dbReference>
<dbReference type="PROSITE" id="PS01244">
    <property type="entry name" value="ACONITASE_2"/>
    <property type="match status" value="1"/>
</dbReference>
<proteinExistence type="inferred from homology"/>
<feature type="chain" id="PRO_0000076695" description="3-isopropylmalate dehydratase large subunit">
    <location>
        <begin position="1"/>
        <end position="464"/>
    </location>
</feature>
<feature type="binding site" evidence="1">
    <location>
        <position position="337"/>
    </location>
    <ligand>
        <name>[4Fe-4S] cluster</name>
        <dbReference type="ChEBI" id="CHEBI:49883"/>
    </ligand>
</feature>
<feature type="binding site" evidence="1">
    <location>
        <position position="397"/>
    </location>
    <ligand>
        <name>[4Fe-4S] cluster</name>
        <dbReference type="ChEBI" id="CHEBI:49883"/>
    </ligand>
</feature>
<feature type="binding site" evidence="1">
    <location>
        <position position="400"/>
    </location>
    <ligand>
        <name>[4Fe-4S] cluster</name>
        <dbReference type="ChEBI" id="CHEBI:49883"/>
    </ligand>
</feature>
<organism>
    <name type="scientific">Bacillus cereus (strain ATCC 14579 / DSM 31 / CCUG 7414 / JCM 2152 / NBRC 15305 / NCIMB 9373 / NCTC 2599 / NRRL B-3711)</name>
    <dbReference type="NCBI Taxonomy" id="226900"/>
    <lineage>
        <taxon>Bacteria</taxon>
        <taxon>Bacillati</taxon>
        <taxon>Bacillota</taxon>
        <taxon>Bacilli</taxon>
        <taxon>Bacillales</taxon>
        <taxon>Bacillaceae</taxon>
        <taxon>Bacillus</taxon>
        <taxon>Bacillus cereus group</taxon>
    </lineage>
</organism>